<comment type="function">
    <text evidence="1">An accessory protein needed during the final step in the assembly of 30S ribosomal subunit, possibly for assembly of the head region. Essential for efficient processing of 16S rRNA. May be needed both before and after RbfA during the maturation of 16S rRNA. It has affinity for free ribosomal 30S subunits but not for 70S ribosomes.</text>
</comment>
<comment type="subunit">
    <text evidence="1">Binds ribosomal protein uS19.</text>
</comment>
<comment type="subcellular location">
    <subcellularLocation>
        <location evidence="1">Cytoplasm</location>
    </subcellularLocation>
</comment>
<comment type="domain">
    <text evidence="1">The PRC barrel domain binds ribosomal protein uS19.</text>
</comment>
<comment type="similarity">
    <text evidence="1">Belongs to the RimM family.</text>
</comment>
<proteinExistence type="inferred from homology"/>
<sequence>MIKEFRDLIDSMIPVGKVVKPHGLRGEVKMKSLTNQLKVFETLKKVLLYDEKAGTVVRAEIDTIRRAGKGYIVHFKGFKSVEAAERIRGFYVYAPLNVLPPLKEGEYYFYQLLDCEVYDPEGEYIGKVTDIIETGANDVIVVTKELPDFTVEEELIPVIKDYIVEFRFKDKKIVAKRLEYLTLEGKEDNDDENQRIDDIS</sequence>
<protein>
    <recommendedName>
        <fullName evidence="1">Ribosome maturation factor RimM</fullName>
    </recommendedName>
</protein>
<feature type="chain" id="PRO_1000201808" description="Ribosome maturation factor RimM">
    <location>
        <begin position="1"/>
        <end position="200"/>
    </location>
</feature>
<feature type="domain" description="PRC barrel" evidence="1">
    <location>
        <begin position="103"/>
        <end position="181"/>
    </location>
</feature>
<organism>
    <name type="scientific">Kosmotoga olearia (strain ATCC BAA-1733 / DSM 21960 / TBF 19.5.1)</name>
    <dbReference type="NCBI Taxonomy" id="521045"/>
    <lineage>
        <taxon>Bacteria</taxon>
        <taxon>Thermotogati</taxon>
        <taxon>Thermotogota</taxon>
        <taxon>Thermotogae</taxon>
        <taxon>Kosmotogales</taxon>
        <taxon>Kosmotogaceae</taxon>
        <taxon>Kosmotoga</taxon>
    </lineage>
</organism>
<keyword id="KW-0143">Chaperone</keyword>
<keyword id="KW-0963">Cytoplasm</keyword>
<keyword id="KW-1185">Reference proteome</keyword>
<keyword id="KW-0690">Ribosome biogenesis</keyword>
<keyword id="KW-0698">rRNA processing</keyword>
<gene>
    <name evidence="1" type="primary">rimM</name>
    <name type="ordered locus">Kole_1463</name>
</gene>
<accession>C5CEB5</accession>
<name>RIMM_KOSOT</name>
<dbReference type="EMBL" id="CP001634">
    <property type="protein sequence ID" value="ACR80155.1"/>
    <property type="molecule type" value="Genomic_DNA"/>
</dbReference>
<dbReference type="RefSeq" id="WP_015868802.1">
    <property type="nucleotide sequence ID" value="NC_012785.1"/>
</dbReference>
<dbReference type="SMR" id="C5CEB5"/>
<dbReference type="STRING" id="521045.Kole_1463"/>
<dbReference type="KEGG" id="kol:Kole_1463"/>
<dbReference type="eggNOG" id="COG0806">
    <property type="taxonomic scope" value="Bacteria"/>
</dbReference>
<dbReference type="HOGENOM" id="CLU_077636_3_2_0"/>
<dbReference type="OrthoDB" id="9810331at2"/>
<dbReference type="Proteomes" id="UP000002382">
    <property type="component" value="Chromosome"/>
</dbReference>
<dbReference type="GO" id="GO:0005737">
    <property type="term" value="C:cytoplasm"/>
    <property type="evidence" value="ECO:0007669"/>
    <property type="project" value="UniProtKB-SubCell"/>
</dbReference>
<dbReference type="GO" id="GO:0005840">
    <property type="term" value="C:ribosome"/>
    <property type="evidence" value="ECO:0007669"/>
    <property type="project" value="InterPro"/>
</dbReference>
<dbReference type="GO" id="GO:0043022">
    <property type="term" value="F:ribosome binding"/>
    <property type="evidence" value="ECO:0007669"/>
    <property type="project" value="InterPro"/>
</dbReference>
<dbReference type="GO" id="GO:0042274">
    <property type="term" value="P:ribosomal small subunit biogenesis"/>
    <property type="evidence" value="ECO:0007669"/>
    <property type="project" value="UniProtKB-UniRule"/>
</dbReference>
<dbReference type="GO" id="GO:0006364">
    <property type="term" value="P:rRNA processing"/>
    <property type="evidence" value="ECO:0007669"/>
    <property type="project" value="UniProtKB-UniRule"/>
</dbReference>
<dbReference type="Gene3D" id="2.30.30.240">
    <property type="entry name" value="PRC-barrel domain"/>
    <property type="match status" value="1"/>
</dbReference>
<dbReference type="Gene3D" id="2.40.30.60">
    <property type="entry name" value="RimM"/>
    <property type="match status" value="1"/>
</dbReference>
<dbReference type="HAMAP" id="MF_00014">
    <property type="entry name" value="Ribosome_mat_RimM"/>
    <property type="match status" value="1"/>
</dbReference>
<dbReference type="InterPro" id="IPR027275">
    <property type="entry name" value="PRC-brl_dom"/>
</dbReference>
<dbReference type="InterPro" id="IPR011033">
    <property type="entry name" value="PRC_barrel-like_sf"/>
</dbReference>
<dbReference type="InterPro" id="IPR011961">
    <property type="entry name" value="RimM"/>
</dbReference>
<dbReference type="InterPro" id="IPR002676">
    <property type="entry name" value="RimM_N"/>
</dbReference>
<dbReference type="InterPro" id="IPR036976">
    <property type="entry name" value="RimM_N_sf"/>
</dbReference>
<dbReference type="InterPro" id="IPR009000">
    <property type="entry name" value="Transl_B-barrel_sf"/>
</dbReference>
<dbReference type="NCBIfam" id="TIGR02273">
    <property type="entry name" value="16S_RimM"/>
    <property type="match status" value="1"/>
</dbReference>
<dbReference type="PANTHER" id="PTHR33692">
    <property type="entry name" value="RIBOSOME MATURATION FACTOR RIMM"/>
    <property type="match status" value="1"/>
</dbReference>
<dbReference type="PANTHER" id="PTHR33692:SF1">
    <property type="entry name" value="RIBOSOME MATURATION FACTOR RIMM"/>
    <property type="match status" value="1"/>
</dbReference>
<dbReference type="Pfam" id="PF05239">
    <property type="entry name" value="PRC"/>
    <property type="match status" value="1"/>
</dbReference>
<dbReference type="Pfam" id="PF01782">
    <property type="entry name" value="RimM"/>
    <property type="match status" value="1"/>
</dbReference>
<dbReference type="SUPFAM" id="SSF50346">
    <property type="entry name" value="PRC-barrel domain"/>
    <property type="match status" value="1"/>
</dbReference>
<dbReference type="SUPFAM" id="SSF50447">
    <property type="entry name" value="Translation proteins"/>
    <property type="match status" value="1"/>
</dbReference>
<reference key="1">
    <citation type="submission" date="2009-06" db="EMBL/GenBank/DDBJ databases">
        <title>Complete sequence of Thermotogales bacterium TBF 19.5.1.</title>
        <authorList>
            <consortium name="US DOE Joint Genome Institute"/>
            <person name="Lucas S."/>
            <person name="Copeland A."/>
            <person name="Lapidus A."/>
            <person name="Glavina del Rio T."/>
            <person name="Tice H."/>
            <person name="Bruce D."/>
            <person name="Goodwin L."/>
            <person name="Pitluck S."/>
            <person name="Chertkov O."/>
            <person name="Brettin T."/>
            <person name="Detter J.C."/>
            <person name="Han C."/>
            <person name="Schmutz J."/>
            <person name="Larimer F."/>
            <person name="Land M."/>
            <person name="Hauser L."/>
            <person name="Kyrpides N."/>
            <person name="Ovchinnikova G."/>
            <person name="Noll K."/>
        </authorList>
    </citation>
    <scope>NUCLEOTIDE SEQUENCE [LARGE SCALE GENOMIC DNA]</scope>
    <source>
        <strain>ATCC BAA-1733 / DSM 21960 / TBF 19.5.1</strain>
    </source>
</reference>
<evidence type="ECO:0000255" key="1">
    <source>
        <dbReference type="HAMAP-Rule" id="MF_00014"/>
    </source>
</evidence>